<accession>C1CH28</accession>
<dbReference type="EC" id="6.1.1.1" evidence="1"/>
<dbReference type="EMBL" id="CP000919">
    <property type="protein sequence ID" value="ACO19239.1"/>
    <property type="molecule type" value="Genomic_DNA"/>
</dbReference>
<dbReference type="RefSeq" id="WP_000546887.1">
    <property type="nucleotide sequence ID" value="NC_012466.1"/>
</dbReference>
<dbReference type="SMR" id="C1CH28"/>
<dbReference type="KEGG" id="sjj:SPJ_2120"/>
<dbReference type="HOGENOM" id="CLU_024003_0_3_9"/>
<dbReference type="Proteomes" id="UP000002206">
    <property type="component" value="Chromosome"/>
</dbReference>
<dbReference type="GO" id="GO:0005829">
    <property type="term" value="C:cytosol"/>
    <property type="evidence" value="ECO:0007669"/>
    <property type="project" value="TreeGrafter"/>
</dbReference>
<dbReference type="GO" id="GO:0005524">
    <property type="term" value="F:ATP binding"/>
    <property type="evidence" value="ECO:0007669"/>
    <property type="project" value="UniProtKB-UniRule"/>
</dbReference>
<dbReference type="GO" id="GO:0003723">
    <property type="term" value="F:RNA binding"/>
    <property type="evidence" value="ECO:0007669"/>
    <property type="project" value="UniProtKB-KW"/>
</dbReference>
<dbReference type="GO" id="GO:0004831">
    <property type="term" value="F:tyrosine-tRNA ligase activity"/>
    <property type="evidence" value="ECO:0007669"/>
    <property type="project" value="UniProtKB-UniRule"/>
</dbReference>
<dbReference type="GO" id="GO:0006437">
    <property type="term" value="P:tyrosyl-tRNA aminoacylation"/>
    <property type="evidence" value="ECO:0007669"/>
    <property type="project" value="UniProtKB-UniRule"/>
</dbReference>
<dbReference type="CDD" id="cd00165">
    <property type="entry name" value="S4"/>
    <property type="match status" value="1"/>
</dbReference>
<dbReference type="CDD" id="cd00805">
    <property type="entry name" value="TyrRS_core"/>
    <property type="match status" value="1"/>
</dbReference>
<dbReference type="FunFam" id="1.10.240.10:FF:000001">
    <property type="entry name" value="Tyrosine--tRNA ligase"/>
    <property type="match status" value="1"/>
</dbReference>
<dbReference type="FunFam" id="3.10.290.10:FF:000012">
    <property type="entry name" value="Tyrosine--tRNA ligase"/>
    <property type="match status" value="1"/>
</dbReference>
<dbReference type="FunFam" id="3.40.50.620:FF:000008">
    <property type="entry name" value="Tyrosine--tRNA ligase"/>
    <property type="match status" value="1"/>
</dbReference>
<dbReference type="Gene3D" id="3.40.50.620">
    <property type="entry name" value="HUPs"/>
    <property type="match status" value="1"/>
</dbReference>
<dbReference type="Gene3D" id="3.10.290.10">
    <property type="entry name" value="RNA-binding S4 domain"/>
    <property type="match status" value="1"/>
</dbReference>
<dbReference type="Gene3D" id="1.10.240.10">
    <property type="entry name" value="Tyrosyl-Transfer RNA Synthetase"/>
    <property type="match status" value="1"/>
</dbReference>
<dbReference type="HAMAP" id="MF_02006">
    <property type="entry name" value="Tyr_tRNA_synth_type1"/>
    <property type="match status" value="1"/>
</dbReference>
<dbReference type="InterPro" id="IPR001412">
    <property type="entry name" value="aa-tRNA-synth_I_CS"/>
</dbReference>
<dbReference type="InterPro" id="IPR002305">
    <property type="entry name" value="aa-tRNA-synth_Ic"/>
</dbReference>
<dbReference type="InterPro" id="IPR014729">
    <property type="entry name" value="Rossmann-like_a/b/a_fold"/>
</dbReference>
<dbReference type="InterPro" id="IPR002942">
    <property type="entry name" value="S4_RNA-bd"/>
</dbReference>
<dbReference type="InterPro" id="IPR036986">
    <property type="entry name" value="S4_RNA-bd_sf"/>
</dbReference>
<dbReference type="InterPro" id="IPR054608">
    <property type="entry name" value="SYY-like_C"/>
</dbReference>
<dbReference type="InterPro" id="IPR002307">
    <property type="entry name" value="Tyr-tRNA-ligase"/>
</dbReference>
<dbReference type="InterPro" id="IPR024088">
    <property type="entry name" value="Tyr-tRNA-ligase_bac-type"/>
</dbReference>
<dbReference type="InterPro" id="IPR024107">
    <property type="entry name" value="Tyr-tRNA-ligase_bac_1"/>
</dbReference>
<dbReference type="NCBIfam" id="TIGR00234">
    <property type="entry name" value="tyrS"/>
    <property type="match status" value="1"/>
</dbReference>
<dbReference type="PANTHER" id="PTHR11766:SF0">
    <property type="entry name" value="TYROSINE--TRNA LIGASE, MITOCHONDRIAL"/>
    <property type="match status" value="1"/>
</dbReference>
<dbReference type="PANTHER" id="PTHR11766">
    <property type="entry name" value="TYROSYL-TRNA SYNTHETASE"/>
    <property type="match status" value="1"/>
</dbReference>
<dbReference type="Pfam" id="PF22421">
    <property type="entry name" value="SYY_C-terminal"/>
    <property type="match status" value="1"/>
</dbReference>
<dbReference type="Pfam" id="PF00579">
    <property type="entry name" value="tRNA-synt_1b"/>
    <property type="match status" value="1"/>
</dbReference>
<dbReference type="PRINTS" id="PR01040">
    <property type="entry name" value="TRNASYNTHTYR"/>
</dbReference>
<dbReference type="SMART" id="SM00363">
    <property type="entry name" value="S4"/>
    <property type="match status" value="1"/>
</dbReference>
<dbReference type="SUPFAM" id="SSF55174">
    <property type="entry name" value="Alpha-L RNA-binding motif"/>
    <property type="match status" value="1"/>
</dbReference>
<dbReference type="SUPFAM" id="SSF52374">
    <property type="entry name" value="Nucleotidylyl transferase"/>
    <property type="match status" value="1"/>
</dbReference>
<dbReference type="PROSITE" id="PS00178">
    <property type="entry name" value="AA_TRNA_LIGASE_I"/>
    <property type="match status" value="1"/>
</dbReference>
<dbReference type="PROSITE" id="PS50889">
    <property type="entry name" value="S4"/>
    <property type="match status" value="1"/>
</dbReference>
<organism>
    <name type="scientific">Streptococcus pneumoniae (strain JJA)</name>
    <dbReference type="NCBI Taxonomy" id="488222"/>
    <lineage>
        <taxon>Bacteria</taxon>
        <taxon>Bacillati</taxon>
        <taxon>Bacillota</taxon>
        <taxon>Bacilli</taxon>
        <taxon>Lactobacillales</taxon>
        <taxon>Streptococcaceae</taxon>
        <taxon>Streptococcus</taxon>
    </lineage>
</organism>
<protein>
    <recommendedName>
        <fullName evidence="1">Tyrosine--tRNA ligase</fullName>
        <ecNumber evidence="1">6.1.1.1</ecNumber>
    </recommendedName>
    <alternativeName>
        <fullName evidence="1">Tyrosyl-tRNA synthetase</fullName>
        <shortName evidence="1">TyrRS</shortName>
    </alternativeName>
</protein>
<sequence length="418" mass="47481">MHIFDELKERGLIFQTTDEEALRKALEEGQVSYYTGYDPTADSLHLGHLVAILTSRRLQLAGHKPYALVGGATGLIGDPSFKDAERSLQTKDTVDGWVKSIQGQLSRFLDFENGENKAVMVNNYDWFGSISFIDFLRDIGKYFTVNYMMSKESVKKRIETGISYTEFAYQIMQGYDFFVLNQDHNVTLQIGGSDQWGNMTAGTELLRRKADKTGHVITVPLITDATGKKFGKSEGNAVWLNPEKTSPYEMYQFWMNVMDADAVRFLKIFTFLSLDEIEDIRKQFEAAPHERLAQKVLAREVVTLVHGEEAYKEALNITEQLFAGNIKNLSVKELKQGLRGVPNYQVQADENNNIVELLVSSGIVNSKRQAREDVQNGAIYVNGDRIQELDYVLSDADKLENELTVIRRGKKKYFVLTY</sequence>
<reference key="1">
    <citation type="journal article" date="2010" name="Genome Biol.">
        <title>Structure and dynamics of the pan-genome of Streptococcus pneumoniae and closely related species.</title>
        <authorList>
            <person name="Donati C."/>
            <person name="Hiller N.L."/>
            <person name="Tettelin H."/>
            <person name="Muzzi A."/>
            <person name="Croucher N.J."/>
            <person name="Angiuoli S.V."/>
            <person name="Oggioni M."/>
            <person name="Dunning Hotopp J.C."/>
            <person name="Hu F.Z."/>
            <person name="Riley D.R."/>
            <person name="Covacci A."/>
            <person name="Mitchell T.J."/>
            <person name="Bentley S.D."/>
            <person name="Kilian M."/>
            <person name="Ehrlich G.D."/>
            <person name="Rappuoli R."/>
            <person name="Moxon E.R."/>
            <person name="Masignani V."/>
        </authorList>
    </citation>
    <scope>NUCLEOTIDE SEQUENCE [LARGE SCALE GENOMIC DNA]</scope>
    <source>
        <strain>JJA</strain>
    </source>
</reference>
<feature type="chain" id="PRO_1000189341" description="Tyrosine--tRNA ligase">
    <location>
        <begin position="1"/>
        <end position="418"/>
    </location>
</feature>
<feature type="domain" description="S4 RNA-binding" evidence="1">
    <location>
        <begin position="352"/>
        <end position="418"/>
    </location>
</feature>
<feature type="short sequence motif" description="'HIGH' region">
    <location>
        <begin position="39"/>
        <end position="48"/>
    </location>
</feature>
<feature type="short sequence motif" description="'KMSKS' region">
    <location>
        <begin position="229"/>
        <end position="233"/>
    </location>
</feature>
<feature type="binding site" evidence="1">
    <location>
        <position position="34"/>
    </location>
    <ligand>
        <name>L-tyrosine</name>
        <dbReference type="ChEBI" id="CHEBI:58315"/>
    </ligand>
</feature>
<feature type="binding site" evidence="1">
    <location>
        <position position="169"/>
    </location>
    <ligand>
        <name>L-tyrosine</name>
        <dbReference type="ChEBI" id="CHEBI:58315"/>
    </ligand>
</feature>
<feature type="binding site" evidence="1">
    <location>
        <position position="173"/>
    </location>
    <ligand>
        <name>L-tyrosine</name>
        <dbReference type="ChEBI" id="CHEBI:58315"/>
    </ligand>
</feature>
<feature type="binding site" evidence="1">
    <location>
        <position position="232"/>
    </location>
    <ligand>
        <name>ATP</name>
        <dbReference type="ChEBI" id="CHEBI:30616"/>
    </ligand>
</feature>
<keyword id="KW-0030">Aminoacyl-tRNA synthetase</keyword>
<keyword id="KW-0067">ATP-binding</keyword>
<keyword id="KW-0963">Cytoplasm</keyword>
<keyword id="KW-0436">Ligase</keyword>
<keyword id="KW-0547">Nucleotide-binding</keyword>
<keyword id="KW-0648">Protein biosynthesis</keyword>
<keyword id="KW-0694">RNA-binding</keyword>
<gene>
    <name evidence="1" type="primary">tyrS</name>
    <name type="ordered locus">SPJ_2120</name>
</gene>
<name>SYY_STRZJ</name>
<evidence type="ECO:0000255" key="1">
    <source>
        <dbReference type="HAMAP-Rule" id="MF_02006"/>
    </source>
</evidence>
<proteinExistence type="inferred from homology"/>
<comment type="function">
    <text evidence="1">Catalyzes the attachment of tyrosine to tRNA(Tyr) in a two-step reaction: tyrosine is first activated by ATP to form Tyr-AMP and then transferred to the acceptor end of tRNA(Tyr).</text>
</comment>
<comment type="catalytic activity">
    <reaction evidence="1">
        <text>tRNA(Tyr) + L-tyrosine + ATP = L-tyrosyl-tRNA(Tyr) + AMP + diphosphate + H(+)</text>
        <dbReference type="Rhea" id="RHEA:10220"/>
        <dbReference type="Rhea" id="RHEA-COMP:9706"/>
        <dbReference type="Rhea" id="RHEA-COMP:9707"/>
        <dbReference type="ChEBI" id="CHEBI:15378"/>
        <dbReference type="ChEBI" id="CHEBI:30616"/>
        <dbReference type="ChEBI" id="CHEBI:33019"/>
        <dbReference type="ChEBI" id="CHEBI:58315"/>
        <dbReference type="ChEBI" id="CHEBI:78442"/>
        <dbReference type="ChEBI" id="CHEBI:78536"/>
        <dbReference type="ChEBI" id="CHEBI:456215"/>
        <dbReference type="EC" id="6.1.1.1"/>
    </reaction>
</comment>
<comment type="subunit">
    <text evidence="1">Homodimer.</text>
</comment>
<comment type="subcellular location">
    <subcellularLocation>
        <location evidence="1">Cytoplasm</location>
    </subcellularLocation>
</comment>
<comment type="similarity">
    <text evidence="1">Belongs to the class-I aminoacyl-tRNA synthetase family. TyrS type 1 subfamily.</text>
</comment>